<protein>
    <recommendedName>
        <fullName evidence="4">Phospholipase A1 EG1, chloroplastic/mitochondrial</fullName>
        <ecNumber evidence="4">3.1.1.32</ecNumber>
    </recommendedName>
    <alternativeName>
        <fullName evidence="4">Protein EXTRA GLUME 1</fullName>
    </alternativeName>
</protein>
<evidence type="ECO:0000250" key="1">
    <source>
        <dbReference type="UniProtKB" id="Q8S1D9"/>
    </source>
</evidence>
<evidence type="ECO:0000250" key="2">
    <source>
        <dbReference type="UniProtKB" id="Q948R1"/>
    </source>
</evidence>
<evidence type="ECO:0000255" key="3"/>
<evidence type="ECO:0000305" key="4"/>
<evidence type="ECO:0000312" key="5">
    <source>
        <dbReference type="EMBL" id="EAY76846.1"/>
    </source>
</evidence>
<organism>
    <name type="scientific">Oryza sativa subsp. indica</name>
    <name type="common">Rice</name>
    <dbReference type="NCBI Taxonomy" id="39946"/>
    <lineage>
        <taxon>Eukaryota</taxon>
        <taxon>Viridiplantae</taxon>
        <taxon>Streptophyta</taxon>
        <taxon>Embryophyta</taxon>
        <taxon>Tracheophyta</taxon>
        <taxon>Spermatophyta</taxon>
        <taxon>Magnoliopsida</taxon>
        <taxon>Liliopsida</taxon>
        <taxon>Poales</taxon>
        <taxon>Poaceae</taxon>
        <taxon>BOP clade</taxon>
        <taxon>Oryzoideae</taxon>
        <taxon>Oryzeae</taxon>
        <taxon>Oryzinae</taxon>
        <taxon>Oryza</taxon>
        <taxon>Oryza sativa</taxon>
    </lineage>
</organism>
<feature type="transit peptide" description="Chloroplast and mitochondrion" evidence="3">
    <location>
        <begin position="1"/>
        <end position="31"/>
    </location>
</feature>
<feature type="chain" id="PRO_0000434872" description="Phospholipase A1 EG1, chloroplastic/mitochondrial">
    <location>
        <begin position="32"/>
        <end position="435"/>
    </location>
</feature>
<feature type="short sequence motif" description="GXSXG" evidence="1">
    <location>
        <begin position="264"/>
        <end position="268"/>
    </location>
</feature>
<feature type="active site" description="Acyl-ester intermediate" evidence="2">
    <location>
        <position position="266"/>
    </location>
</feature>
<feature type="active site" description="Charge relay system" evidence="2">
    <location>
        <position position="324"/>
    </location>
</feature>
<feature type="active site" description="Charge relay system" evidence="2">
    <location>
        <position position="371"/>
    </location>
</feature>
<gene>
    <name evidence="4" type="primary">EG1</name>
    <name evidence="5" type="ORF">OsI_04805</name>
</gene>
<accession>A2WY00</accession>
<proteinExistence type="inferred from homology"/>
<dbReference type="EC" id="3.1.1.32" evidence="4"/>
<dbReference type="EMBL" id="CM000126">
    <property type="protein sequence ID" value="EAY76846.1"/>
    <property type="molecule type" value="Genomic_DNA"/>
</dbReference>
<dbReference type="SMR" id="A2WY00"/>
<dbReference type="ESTHER" id="orysa-Q8S1D9">
    <property type="family name" value="Plant_phospholipase"/>
</dbReference>
<dbReference type="EnsemblPlants" id="BGIOSGA004990-TA">
    <property type="protein sequence ID" value="BGIOSGA004990-PA"/>
    <property type="gene ID" value="BGIOSGA004990"/>
</dbReference>
<dbReference type="EnsemblPlants" id="OsGoSa_01g0042910.01">
    <property type="protein sequence ID" value="OsGoSa_01g0042910.01"/>
    <property type="gene ID" value="OsGoSa_01g0042910"/>
</dbReference>
<dbReference type="EnsemblPlants" id="OsIR64_01g0042340.01">
    <property type="protein sequence ID" value="OsIR64_01g0042340.01"/>
    <property type="gene ID" value="OsIR64_01g0042340"/>
</dbReference>
<dbReference type="EnsemblPlants" id="OsKYG_01g0042610.01">
    <property type="protein sequence ID" value="OsKYG_01g0042610.01"/>
    <property type="gene ID" value="OsKYG_01g0042610"/>
</dbReference>
<dbReference type="EnsemblPlants" id="OsLaMu_01g0042690.01">
    <property type="protein sequence ID" value="OsLaMu_01g0042690.01"/>
    <property type="gene ID" value="OsLaMu_01g0042690"/>
</dbReference>
<dbReference type="EnsemblPlants" id="OsLima_01g0042670.01">
    <property type="protein sequence ID" value="OsLima_01g0042670.01"/>
    <property type="gene ID" value="OsLima_01g0042670"/>
</dbReference>
<dbReference type="EnsemblPlants" id="OsLiXu_01g0042900.01">
    <property type="protein sequence ID" value="OsLiXu_01g0042900.01"/>
    <property type="gene ID" value="OsLiXu_01g0042900"/>
</dbReference>
<dbReference type="EnsemblPlants" id="OsMH63_01G043590_01">
    <property type="protein sequence ID" value="OsMH63_01G043590_01"/>
    <property type="gene ID" value="OsMH63_01G043590"/>
</dbReference>
<dbReference type="EnsemblPlants" id="OsPr106_01g0042700.01">
    <property type="protein sequence ID" value="OsPr106_01g0042700.01"/>
    <property type="gene ID" value="OsPr106_01g0042700"/>
</dbReference>
<dbReference type="EnsemblPlants" id="OsZS97_01G042910_01">
    <property type="protein sequence ID" value="OsZS97_01G042910_01"/>
    <property type="gene ID" value="OsZS97_01G042910"/>
</dbReference>
<dbReference type="Gramene" id="BGIOSGA004990-TA">
    <property type="protein sequence ID" value="BGIOSGA004990-PA"/>
    <property type="gene ID" value="BGIOSGA004990"/>
</dbReference>
<dbReference type="Gramene" id="OsGoSa_01g0042910.01">
    <property type="protein sequence ID" value="OsGoSa_01g0042910.01"/>
    <property type="gene ID" value="OsGoSa_01g0042910"/>
</dbReference>
<dbReference type="Gramene" id="OsIR64_01g0042340.01">
    <property type="protein sequence ID" value="OsIR64_01g0042340.01"/>
    <property type="gene ID" value="OsIR64_01g0042340"/>
</dbReference>
<dbReference type="Gramene" id="OsKYG_01g0042610.01">
    <property type="protein sequence ID" value="OsKYG_01g0042610.01"/>
    <property type="gene ID" value="OsKYG_01g0042610"/>
</dbReference>
<dbReference type="Gramene" id="OsLaMu_01g0042690.01">
    <property type="protein sequence ID" value="OsLaMu_01g0042690.01"/>
    <property type="gene ID" value="OsLaMu_01g0042690"/>
</dbReference>
<dbReference type="Gramene" id="OsLima_01g0042670.01">
    <property type="protein sequence ID" value="OsLima_01g0042670.01"/>
    <property type="gene ID" value="OsLima_01g0042670"/>
</dbReference>
<dbReference type="Gramene" id="OsLiXu_01g0042900.01">
    <property type="protein sequence ID" value="OsLiXu_01g0042900.01"/>
    <property type="gene ID" value="OsLiXu_01g0042900"/>
</dbReference>
<dbReference type="Gramene" id="OsMH63_01G043590_01">
    <property type="protein sequence ID" value="OsMH63_01G043590_01"/>
    <property type="gene ID" value="OsMH63_01G043590"/>
</dbReference>
<dbReference type="Gramene" id="OsPr106_01g0042700.01">
    <property type="protein sequence ID" value="OsPr106_01g0042700.01"/>
    <property type="gene ID" value="OsPr106_01g0042700"/>
</dbReference>
<dbReference type="Gramene" id="OsZS97_01G042910_01">
    <property type="protein sequence ID" value="OsZS97_01G042910_01"/>
    <property type="gene ID" value="OsZS97_01G042910"/>
</dbReference>
<dbReference type="HOGENOM" id="CLU_018841_2_0_1"/>
<dbReference type="OMA" id="SAGYMRC"/>
<dbReference type="OrthoDB" id="426718at2759"/>
<dbReference type="Proteomes" id="UP000007015">
    <property type="component" value="Chromosome 1"/>
</dbReference>
<dbReference type="GO" id="GO:0009507">
    <property type="term" value="C:chloroplast"/>
    <property type="evidence" value="ECO:0007669"/>
    <property type="project" value="UniProtKB-SubCell"/>
</dbReference>
<dbReference type="GO" id="GO:0005739">
    <property type="term" value="C:mitochondrion"/>
    <property type="evidence" value="ECO:0007669"/>
    <property type="project" value="UniProtKB-SubCell"/>
</dbReference>
<dbReference type="GO" id="GO:0008970">
    <property type="term" value="F:phospholipase A1 activity"/>
    <property type="evidence" value="ECO:0007669"/>
    <property type="project" value="UniProtKB-EC"/>
</dbReference>
<dbReference type="GO" id="GO:0010582">
    <property type="term" value="P:floral meristem determinacy"/>
    <property type="evidence" value="ECO:0007669"/>
    <property type="project" value="EnsemblPlants"/>
</dbReference>
<dbReference type="GO" id="GO:0048449">
    <property type="term" value="P:floral organ formation"/>
    <property type="evidence" value="ECO:0007669"/>
    <property type="project" value="EnsemblPlants"/>
</dbReference>
<dbReference type="GO" id="GO:0016042">
    <property type="term" value="P:lipid catabolic process"/>
    <property type="evidence" value="ECO:0007669"/>
    <property type="project" value="UniProtKB-KW"/>
</dbReference>
<dbReference type="CDD" id="cd00519">
    <property type="entry name" value="Lipase_3"/>
    <property type="match status" value="1"/>
</dbReference>
<dbReference type="FunFam" id="3.40.50.1820:FF:000106">
    <property type="entry name" value="Galactolipase DONGLE, chloroplastic"/>
    <property type="match status" value="1"/>
</dbReference>
<dbReference type="Gene3D" id="3.40.50.1820">
    <property type="entry name" value="alpha/beta hydrolase"/>
    <property type="match status" value="1"/>
</dbReference>
<dbReference type="InterPro" id="IPR029058">
    <property type="entry name" value="AB_hydrolase_fold"/>
</dbReference>
<dbReference type="InterPro" id="IPR002921">
    <property type="entry name" value="Fungal_lipase-type"/>
</dbReference>
<dbReference type="PANTHER" id="PTHR31403:SF58">
    <property type="entry name" value="PHOSPHOLIPASE A1 EG1, CHLOROPLASTIC_MITOCHONDRIAL"/>
    <property type="match status" value="1"/>
</dbReference>
<dbReference type="PANTHER" id="PTHR31403">
    <property type="entry name" value="PHOSPHOLIPASE A1-IBETA2, CHLOROPLASTIC"/>
    <property type="match status" value="1"/>
</dbReference>
<dbReference type="Pfam" id="PF01764">
    <property type="entry name" value="Lipase_3"/>
    <property type="match status" value="1"/>
</dbReference>
<dbReference type="SUPFAM" id="SSF53474">
    <property type="entry name" value="alpha/beta-Hydrolases"/>
    <property type="match status" value="1"/>
</dbReference>
<name>EG1_ORYSI</name>
<reference key="1">
    <citation type="journal article" date="2005" name="PLoS Biol.">
        <title>The genomes of Oryza sativa: a history of duplications.</title>
        <authorList>
            <person name="Yu J."/>
            <person name="Wang J."/>
            <person name="Lin W."/>
            <person name="Li S."/>
            <person name="Li H."/>
            <person name="Zhou J."/>
            <person name="Ni P."/>
            <person name="Dong W."/>
            <person name="Hu S."/>
            <person name="Zeng C."/>
            <person name="Zhang J."/>
            <person name="Zhang Y."/>
            <person name="Li R."/>
            <person name="Xu Z."/>
            <person name="Li S."/>
            <person name="Li X."/>
            <person name="Zheng H."/>
            <person name="Cong L."/>
            <person name="Lin L."/>
            <person name="Yin J."/>
            <person name="Geng J."/>
            <person name="Li G."/>
            <person name="Shi J."/>
            <person name="Liu J."/>
            <person name="Lv H."/>
            <person name="Li J."/>
            <person name="Wang J."/>
            <person name="Deng Y."/>
            <person name="Ran L."/>
            <person name="Shi X."/>
            <person name="Wang X."/>
            <person name="Wu Q."/>
            <person name="Li C."/>
            <person name="Ren X."/>
            <person name="Wang J."/>
            <person name="Wang X."/>
            <person name="Li D."/>
            <person name="Liu D."/>
            <person name="Zhang X."/>
            <person name="Ji Z."/>
            <person name="Zhao W."/>
            <person name="Sun Y."/>
            <person name="Zhang Z."/>
            <person name="Bao J."/>
            <person name="Han Y."/>
            <person name="Dong L."/>
            <person name="Ji J."/>
            <person name="Chen P."/>
            <person name="Wu S."/>
            <person name="Liu J."/>
            <person name="Xiao Y."/>
            <person name="Bu D."/>
            <person name="Tan J."/>
            <person name="Yang L."/>
            <person name="Ye C."/>
            <person name="Zhang J."/>
            <person name="Xu J."/>
            <person name="Zhou Y."/>
            <person name="Yu Y."/>
            <person name="Zhang B."/>
            <person name="Zhuang S."/>
            <person name="Wei H."/>
            <person name="Liu B."/>
            <person name="Lei M."/>
            <person name="Yu H."/>
            <person name="Li Y."/>
            <person name="Xu H."/>
            <person name="Wei S."/>
            <person name="He X."/>
            <person name="Fang L."/>
            <person name="Zhang Z."/>
            <person name="Zhang Y."/>
            <person name="Huang X."/>
            <person name="Su Z."/>
            <person name="Tong W."/>
            <person name="Li J."/>
            <person name="Tong Z."/>
            <person name="Li S."/>
            <person name="Ye J."/>
            <person name="Wang L."/>
            <person name="Fang L."/>
            <person name="Lei T."/>
            <person name="Chen C.-S."/>
            <person name="Chen H.-C."/>
            <person name="Xu Z."/>
            <person name="Li H."/>
            <person name="Huang H."/>
            <person name="Zhang F."/>
            <person name="Xu H."/>
            <person name="Li N."/>
            <person name="Zhao C."/>
            <person name="Li S."/>
            <person name="Dong L."/>
            <person name="Huang Y."/>
            <person name="Li L."/>
            <person name="Xi Y."/>
            <person name="Qi Q."/>
            <person name="Li W."/>
            <person name="Zhang B."/>
            <person name="Hu W."/>
            <person name="Zhang Y."/>
            <person name="Tian X."/>
            <person name="Jiao Y."/>
            <person name="Liang X."/>
            <person name="Jin J."/>
            <person name="Gao L."/>
            <person name="Zheng W."/>
            <person name="Hao B."/>
            <person name="Liu S.-M."/>
            <person name="Wang W."/>
            <person name="Yuan L."/>
            <person name="Cao M."/>
            <person name="McDermott J."/>
            <person name="Samudrala R."/>
            <person name="Wang J."/>
            <person name="Wong G.K.-S."/>
            <person name="Yang H."/>
        </authorList>
    </citation>
    <scope>NUCLEOTIDE SEQUENCE [LARGE SCALE GENOMIC DNA]</scope>
    <source>
        <strain>cv. 93-11</strain>
    </source>
</reference>
<sequence>MTLPRQCAAACRTGGGGGGVVRCRAVAAAGGAVAVRDAVVAPVARRGAARKTAETVAGMWREVQGCGDWEGMLEPAPHPVLRGEVARYGELVGACYKAFDLDPASRRYLNCKYGRERMLEEVGMGGAGYEVTRYIYAAADVSVPTMEPSTSGRGRWIGYVAVSTDEMSRRLGRRDVLVSFRGTVTPAEWMANLMSSLEAARLDPCDPRPDVKVESGFLSLYTSADKTCRFGGAGSCREQLLREVSRLVAAYSGGGEDVSVTLAGHSMGSALALLSAYDLAELGLNRAAPVTVFSFGGPRVGNAAFKARCDELGVKALRVTNVHDPITKLPGVFLNEATAGVLRPWRHSCYTHVGVELPLDFFKVGDLASVHDLATYISLLRGADKKQPAAAAADAGGVLAKVMDFVGRRRGGGALPWHDAAMIQMGGLVQTLGLI</sequence>
<keyword id="KW-0150">Chloroplast</keyword>
<keyword id="KW-0378">Hydrolase</keyword>
<keyword id="KW-0442">Lipid degradation</keyword>
<keyword id="KW-0443">Lipid metabolism</keyword>
<keyword id="KW-0496">Mitochondrion</keyword>
<keyword id="KW-0934">Plastid</keyword>
<keyword id="KW-1185">Reference proteome</keyword>
<keyword id="KW-0346">Stress response</keyword>
<keyword id="KW-0809">Transit peptide</keyword>
<comment type="function">
    <text evidence="1">Phospholipase that releases free fatty acids from phospholipids. Catalyzes the initial step of jasmonate (JA) biosynthesis. Required for the biosynthesis of endogenous JA in seedling, inflorescence and spikelets. Not essential for JA biosynthesis after wounding. Mediates spikelet development and specification of empty-glume identity. Functions in a high temperature-dependent manner to maintain floral developmental robustness under heat stress conditions. Functions by safeguarding the expression of several floral identity genes, such as MADS1, MADS6 and G1.</text>
</comment>
<comment type="catalytic activity">
    <reaction evidence="4">
        <text>a 1,2-diacyl-sn-glycero-3-phosphocholine + H2O = a 2-acyl-sn-glycero-3-phosphocholine + a fatty acid + H(+)</text>
        <dbReference type="Rhea" id="RHEA:18689"/>
        <dbReference type="ChEBI" id="CHEBI:15377"/>
        <dbReference type="ChEBI" id="CHEBI:15378"/>
        <dbReference type="ChEBI" id="CHEBI:28868"/>
        <dbReference type="ChEBI" id="CHEBI:57643"/>
        <dbReference type="ChEBI" id="CHEBI:57875"/>
        <dbReference type="EC" id="3.1.1.32"/>
    </reaction>
</comment>
<comment type="subcellular location">
    <subcellularLocation>
        <location evidence="1">Mitochondrion</location>
    </subcellularLocation>
    <subcellularLocation>
        <location evidence="1">Plastid</location>
        <location evidence="1">Chloroplast</location>
    </subcellularLocation>
    <text evidence="1">Localizes predominantly in mitochondrion.</text>
</comment>
<comment type="similarity">
    <text evidence="4">Belongs to the AB hydrolase superfamily. Lipase family.</text>
</comment>